<feature type="chain" id="PRO_1000120110" description="Large ribosomal subunit protein bL32">
    <location>
        <begin position="1"/>
        <end position="59"/>
    </location>
</feature>
<feature type="region of interest" description="Disordered" evidence="2">
    <location>
        <begin position="1"/>
        <end position="59"/>
    </location>
</feature>
<feature type="compositionally biased region" description="Basic residues" evidence="2">
    <location>
        <begin position="9"/>
        <end position="19"/>
    </location>
</feature>
<feature type="compositionally biased region" description="Basic residues" evidence="2">
    <location>
        <begin position="49"/>
        <end position="59"/>
    </location>
</feature>
<organism>
    <name type="scientific">Cupriavidus taiwanensis (strain DSM 17343 / BCRC 17206 / CCUG 44338 / CIP 107171 / LMG 19424 / R1)</name>
    <name type="common">Ralstonia taiwanensis (strain LMG 19424)</name>
    <dbReference type="NCBI Taxonomy" id="977880"/>
    <lineage>
        <taxon>Bacteria</taxon>
        <taxon>Pseudomonadati</taxon>
        <taxon>Pseudomonadota</taxon>
        <taxon>Betaproteobacteria</taxon>
        <taxon>Burkholderiales</taxon>
        <taxon>Burkholderiaceae</taxon>
        <taxon>Cupriavidus</taxon>
    </lineage>
</organism>
<protein>
    <recommendedName>
        <fullName evidence="1">Large ribosomal subunit protein bL32</fullName>
    </recommendedName>
    <alternativeName>
        <fullName evidence="3">50S ribosomal protein L32</fullName>
    </alternativeName>
</protein>
<sequence>MAVQQNKKSPSKRGMHRSHDHLSAAPLAVEPTTGETHLRHHVSPNGYYRGRKVIKTKND</sequence>
<comment type="similarity">
    <text evidence="1">Belongs to the bacterial ribosomal protein bL32 family.</text>
</comment>
<evidence type="ECO:0000255" key="1">
    <source>
        <dbReference type="HAMAP-Rule" id="MF_00340"/>
    </source>
</evidence>
<evidence type="ECO:0000256" key="2">
    <source>
        <dbReference type="SAM" id="MobiDB-lite"/>
    </source>
</evidence>
<evidence type="ECO:0000305" key="3"/>
<gene>
    <name evidence="1" type="primary">rpmF</name>
    <name type="ordered locus">RALTA_A2074</name>
</gene>
<name>RL32_CUPTR</name>
<proteinExistence type="inferred from homology"/>
<keyword id="KW-0687">Ribonucleoprotein</keyword>
<keyword id="KW-0689">Ribosomal protein</keyword>
<reference key="1">
    <citation type="journal article" date="2008" name="Genome Res.">
        <title>Genome sequence of the beta-rhizobium Cupriavidus taiwanensis and comparative genomics of rhizobia.</title>
        <authorList>
            <person name="Amadou C."/>
            <person name="Pascal G."/>
            <person name="Mangenot S."/>
            <person name="Glew M."/>
            <person name="Bontemps C."/>
            <person name="Capela D."/>
            <person name="Carrere S."/>
            <person name="Cruveiller S."/>
            <person name="Dossat C."/>
            <person name="Lajus A."/>
            <person name="Marchetti M."/>
            <person name="Poinsot V."/>
            <person name="Rouy Z."/>
            <person name="Servin B."/>
            <person name="Saad M."/>
            <person name="Schenowitz C."/>
            <person name="Barbe V."/>
            <person name="Batut J."/>
            <person name="Medigue C."/>
            <person name="Masson-Boivin C."/>
        </authorList>
    </citation>
    <scope>NUCLEOTIDE SEQUENCE [LARGE SCALE GENOMIC DNA]</scope>
    <source>
        <strain>DSM 17343 / BCRC 17206 / CCUG 44338 / CIP 107171 / LMG 19424 / R1</strain>
    </source>
</reference>
<accession>B3R215</accession>
<dbReference type="EMBL" id="CU633749">
    <property type="protein sequence ID" value="CAQ70012.1"/>
    <property type="molecule type" value="Genomic_DNA"/>
</dbReference>
<dbReference type="RefSeq" id="WP_010814675.1">
    <property type="nucleotide sequence ID" value="NC_010528.1"/>
</dbReference>
<dbReference type="SMR" id="B3R215"/>
<dbReference type="GeneID" id="34308163"/>
<dbReference type="KEGG" id="cti:RALTA_A2074"/>
<dbReference type="eggNOG" id="COG0333">
    <property type="taxonomic scope" value="Bacteria"/>
</dbReference>
<dbReference type="HOGENOM" id="CLU_129084_2_1_4"/>
<dbReference type="BioCyc" id="CTAI977880:RALTA_RS10065-MONOMER"/>
<dbReference type="Proteomes" id="UP000001692">
    <property type="component" value="Chromosome 1"/>
</dbReference>
<dbReference type="GO" id="GO:0015934">
    <property type="term" value="C:large ribosomal subunit"/>
    <property type="evidence" value="ECO:0007669"/>
    <property type="project" value="InterPro"/>
</dbReference>
<dbReference type="GO" id="GO:0003735">
    <property type="term" value="F:structural constituent of ribosome"/>
    <property type="evidence" value="ECO:0007669"/>
    <property type="project" value="InterPro"/>
</dbReference>
<dbReference type="GO" id="GO:0006412">
    <property type="term" value="P:translation"/>
    <property type="evidence" value="ECO:0007669"/>
    <property type="project" value="UniProtKB-UniRule"/>
</dbReference>
<dbReference type="HAMAP" id="MF_00340">
    <property type="entry name" value="Ribosomal_bL32"/>
    <property type="match status" value="1"/>
</dbReference>
<dbReference type="InterPro" id="IPR002677">
    <property type="entry name" value="Ribosomal_bL32"/>
</dbReference>
<dbReference type="InterPro" id="IPR044957">
    <property type="entry name" value="Ribosomal_bL32_bact"/>
</dbReference>
<dbReference type="InterPro" id="IPR011332">
    <property type="entry name" value="Ribosomal_zn-bd"/>
</dbReference>
<dbReference type="NCBIfam" id="TIGR01031">
    <property type="entry name" value="rpmF_bact"/>
    <property type="match status" value="1"/>
</dbReference>
<dbReference type="PANTHER" id="PTHR35534">
    <property type="entry name" value="50S RIBOSOMAL PROTEIN L32"/>
    <property type="match status" value="1"/>
</dbReference>
<dbReference type="PANTHER" id="PTHR35534:SF1">
    <property type="entry name" value="LARGE RIBOSOMAL SUBUNIT PROTEIN BL32"/>
    <property type="match status" value="1"/>
</dbReference>
<dbReference type="Pfam" id="PF01783">
    <property type="entry name" value="Ribosomal_L32p"/>
    <property type="match status" value="1"/>
</dbReference>
<dbReference type="SUPFAM" id="SSF57829">
    <property type="entry name" value="Zn-binding ribosomal proteins"/>
    <property type="match status" value="1"/>
</dbReference>